<keyword id="KW-0997">Cell inner membrane</keyword>
<keyword id="KW-1003">Cell membrane</keyword>
<keyword id="KW-0472">Membrane</keyword>
<keyword id="KW-0520">NAD</keyword>
<keyword id="KW-0874">Quinone</keyword>
<keyword id="KW-1185">Reference proteome</keyword>
<keyword id="KW-1278">Translocase</keyword>
<keyword id="KW-0812">Transmembrane</keyword>
<keyword id="KW-1133">Transmembrane helix</keyword>
<keyword id="KW-0813">Transport</keyword>
<keyword id="KW-0830">Ubiquinone</keyword>
<gene>
    <name evidence="1" type="primary">nuoA</name>
    <name type="ordered locus">Pcar_0205</name>
</gene>
<proteinExistence type="inferred from homology"/>
<dbReference type="EC" id="7.1.1.-" evidence="1"/>
<dbReference type="EMBL" id="CP000142">
    <property type="protein sequence ID" value="ABA87466.1"/>
    <property type="molecule type" value="Genomic_DNA"/>
</dbReference>
<dbReference type="RefSeq" id="WP_011339866.1">
    <property type="nucleotide sequence ID" value="NC_007498.2"/>
</dbReference>
<dbReference type="SMR" id="Q3A826"/>
<dbReference type="STRING" id="338963.Pcar_0205"/>
<dbReference type="KEGG" id="pca:Pcar_0205"/>
<dbReference type="eggNOG" id="COG0838">
    <property type="taxonomic scope" value="Bacteria"/>
</dbReference>
<dbReference type="HOGENOM" id="CLU_119549_2_0_7"/>
<dbReference type="OrthoDB" id="9791970at2"/>
<dbReference type="Proteomes" id="UP000002534">
    <property type="component" value="Chromosome"/>
</dbReference>
<dbReference type="GO" id="GO:0030964">
    <property type="term" value="C:NADH dehydrogenase complex"/>
    <property type="evidence" value="ECO:0007669"/>
    <property type="project" value="TreeGrafter"/>
</dbReference>
<dbReference type="GO" id="GO:0005886">
    <property type="term" value="C:plasma membrane"/>
    <property type="evidence" value="ECO:0007669"/>
    <property type="project" value="UniProtKB-SubCell"/>
</dbReference>
<dbReference type="GO" id="GO:0008137">
    <property type="term" value="F:NADH dehydrogenase (ubiquinone) activity"/>
    <property type="evidence" value="ECO:0007669"/>
    <property type="project" value="InterPro"/>
</dbReference>
<dbReference type="GO" id="GO:0050136">
    <property type="term" value="F:NADH:ubiquinone reductase (non-electrogenic) activity"/>
    <property type="evidence" value="ECO:0007669"/>
    <property type="project" value="UniProtKB-UniRule"/>
</dbReference>
<dbReference type="GO" id="GO:0048038">
    <property type="term" value="F:quinone binding"/>
    <property type="evidence" value="ECO:0007669"/>
    <property type="project" value="UniProtKB-KW"/>
</dbReference>
<dbReference type="Gene3D" id="1.20.58.1610">
    <property type="entry name" value="NADH:ubiquinone/plastoquinone oxidoreductase, chain 3"/>
    <property type="match status" value="1"/>
</dbReference>
<dbReference type="HAMAP" id="MF_01394">
    <property type="entry name" value="NDH1_NuoA"/>
    <property type="match status" value="1"/>
</dbReference>
<dbReference type="InterPro" id="IPR023043">
    <property type="entry name" value="NAD(P)H_OxRDtase_bac/plastid"/>
</dbReference>
<dbReference type="InterPro" id="IPR000440">
    <property type="entry name" value="NADH_UbQ/plastoQ_OxRdtase_su3"/>
</dbReference>
<dbReference type="InterPro" id="IPR038430">
    <property type="entry name" value="NDAH_ubi_oxred_su3_sf"/>
</dbReference>
<dbReference type="PANTHER" id="PTHR11058:SF21">
    <property type="entry name" value="NADH-QUINONE OXIDOREDUCTASE SUBUNIT A"/>
    <property type="match status" value="1"/>
</dbReference>
<dbReference type="PANTHER" id="PTHR11058">
    <property type="entry name" value="NADH-UBIQUINONE OXIDOREDUCTASE CHAIN 3"/>
    <property type="match status" value="1"/>
</dbReference>
<dbReference type="Pfam" id="PF00507">
    <property type="entry name" value="Oxidored_q4"/>
    <property type="match status" value="1"/>
</dbReference>
<reference key="1">
    <citation type="submission" date="2005-10" db="EMBL/GenBank/DDBJ databases">
        <title>Complete sequence of Pelobacter carbinolicus DSM 2380.</title>
        <authorList>
            <person name="Copeland A."/>
            <person name="Lucas S."/>
            <person name="Lapidus A."/>
            <person name="Barry K."/>
            <person name="Detter J.C."/>
            <person name="Glavina T."/>
            <person name="Hammon N."/>
            <person name="Israni S."/>
            <person name="Pitluck S."/>
            <person name="Chertkov O."/>
            <person name="Schmutz J."/>
            <person name="Larimer F."/>
            <person name="Land M."/>
            <person name="Kyrpides N."/>
            <person name="Ivanova N."/>
            <person name="Richardson P."/>
        </authorList>
    </citation>
    <scope>NUCLEOTIDE SEQUENCE [LARGE SCALE GENOMIC DNA]</scope>
    <source>
        <strain>DSM 2380 / NBRC 103641 / GraBd1</strain>
    </source>
</reference>
<accession>Q3A826</accession>
<evidence type="ECO:0000255" key="1">
    <source>
        <dbReference type="HAMAP-Rule" id="MF_01394"/>
    </source>
</evidence>
<name>NUOA_SYNC1</name>
<protein>
    <recommendedName>
        <fullName evidence="1">NADH-quinone oxidoreductase subunit A</fullName>
        <ecNumber evidence="1">7.1.1.-</ecNumber>
    </recommendedName>
    <alternativeName>
        <fullName evidence="1">NADH dehydrogenase I subunit A</fullName>
    </alternativeName>
    <alternativeName>
        <fullName evidence="1">NDH-1 subunit A</fullName>
    </alternativeName>
    <alternativeName>
        <fullName evidence="1">NUO1</fullName>
    </alternativeName>
</protein>
<comment type="function">
    <text evidence="1">NDH-1 shuttles electrons from NADH, via FMN and iron-sulfur (Fe-S) centers, to quinones in the respiratory chain. The immediate electron acceptor for the enzyme in this species is believed to be ubiquinone. Couples the redox reaction to proton translocation (for every two electrons transferred, four hydrogen ions are translocated across the cytoplasmic membrane), and thus conserves the redox energy in a proton gradient.</text>
</comment>
<comment type="catalytic activity">
    <reaction evidence="1">
        <text>a quinone + NADH + 5 H(+)(in) = a quinol + NAD(+) + 4 H(+)(out)</text>
        <dbReference type="Rhea" id="RHEA:57888"/>
        <dbReference type="ChEBI" id="CHEBI:15378"/>
        <dbReference type="ChEBI" id="CHEBI:24646"/>
        <dbReference type="ChEBI" id="CHEBI:57540"/>
        <dbReference type="ChEBI" id="CHEBI:57945"/>
        <dbReference type="ChEBI" id="CHEBI:132124"/>
    </reaction>
</comment>
<comment type="subunit">
    <text evidence="1">NDH-1 is composed of 14 different subunits. Subunits NuoA, H, J, K, L, M, N constitute the membrane sector of the complex.</text>
</comment>
<comment type="subcellular location">
    <subcellularLocation>
        <location evidence="1">Cell inner membrane</location>
        <topology evidence="1">Multi-pass membrane protein</topology>
    </subcellularLocation>
</comment>
<comment type="similarity">
    <text evidence="1">Belongs to the complex I subunit 3 family.</text>
</comment>
<organism>
    <name type="scientific">Syntrophotalea carbinolica (strain DSM 2380 / NBRC 103641 / GraBd1)</name>
    <name type="common">Pelobacter carbinolicus</name>
    <dbReference type="NCBI Taxonomy" id="338963"/>
    <lineage>
        <taxon>Bacteria</taxon>
        <taxon>Pseudomonadati</taxon>
        <taxon>Thermodesulfobacteriota</taxon>
        <taxon>Desulfuromonadia</taxon>
        <taxon>Desulfuromonadales</taxon>
        <taxon>Syntrophotaleaceae</taxon>
        <taxon>Syntrophotalea</taxon>
    </lineage>
</organism>
<sequence length="141" mass="15606">MVSEHISTQQVGPDALFSPLGWDLLALALYVALACIIVVSLLLAARFLGHRSRTPLKNLPYECGVEPTGPARPGYPVPFYLTAIFFVVFDVEVAFIASWAVAYDLLGWAGLAQIAFFIITLLVALIYLWRRGALDWGPQRR</sequence>
<feature type="chain" id="PRO_0000362711" description="NADH-quinone oxidoreductase subunit A">
    <location>
        <begin position="1"/>
        <end position="141"/>
    </location>
</feature>
<feature type="transmembrane region" description="Helical" evidence="1">
    <location>
        <begin position="24"/>
        <end position="44"/>
    </location>
</feature>
<feature type="transmembrane region" description="Helical" evidence="1">
    <location>
        <begin position="77"/>
        <end position="97"/>
    </location>
</feature>
<feature type="transmembrane region" description="Helical" evidence="1">
    <location>
        <begin position="106"/>
        <end position="126"/>
    </location>
</feature>